<name>DCDB_ACIC1</name>
<accession>A0LWS4</accession>
<organism>
    <name type="scientific">Acidothermus cellulolyticus (strain ATCC 43068 / DSM 8971 / 11B)</name>
    <dbReference type="NCBI Taxonomy" id="351607"/>
    <lineage>
        <taxon>Bacteria</taxon>
        <taxon>Bacillati</taxon>
        <taxon>Actinomycetota</taxon>
        <taxon>Actinomycetes</taxon>
        <taxon>Acidothermales</taxon>
        <taxon>Acidothermaceae</taxon>
        <taxon>Acidothermus</taxon>
    </lineage>
</organism>
<keyword id="KW-0378">Hydrolase</keyword>
<keyword id="KW-0546">Nucleotide metabolism</keyword>
<keyword id="KW-0547">Nucleotide-binding</keyword>
<keyword id="KW-1185">Reference proteome</keyword>
<sequence length="191" mass="21336">MLLSDRDIRAELASGRVTIDPFDPAMIQPSSIDVRLDKYFRVFENHRYPHIDPAVEQPDLTRLVETEGDEPFILHPGEFVLASTYEVIALPDDLAGRLEGKSSLGRLGLLTHSTAGWIDPGFTGHVTLELSNVATLPIKLWPGMKIGQLCLFRTSSPAEHPYGSPVYGSRYQGQRGPTPSRSWQNFHRTKI</sequence>
<feature type="chain" id="PRO_1000009669" description="dCTP deaminase, dUMP-forming">
    <location>
        <begin position="1"/>
        <end position="191"/>
    </location>
</feature>
<feature type="region of interest" description="Disordered" evidence="2">
    <location>
        <begin position="163"/>
        <end position="191"/>
    </location>
</feature>
<feature type="compositionally biased region" description="Polar residues" evidence="2">
    <location>
        <begin position="171"/>
        <end position="191"/>
    </location>
</feature>
<feature type="active site" description="Proton donor/acceptor" evidence="1">
    <location>
        <position position="129"/>
    </location>
</feature>
<feature type="binding site" evidence="1">
    <location>
        <begin position="101"/>
        <end position="106"/>
    </location>
    <ligand>
        <name>dCTP</name>
        <dbReference type="ChEBI" id="CHEBI:61481"/>
    </ligand>
</feature>
<feature type="binding site" evidence="1">
    <location>
        <position position="119"/>
    </location>
    <ligand>
        <name>dCTP</name>
        <dbReference type="ChEBI" id="CHEBI:61481"/>
    </ligand>
</feature>
<feature type="binding site" evidence="1">
    <location>
        <begin position="127"/>
        <end position="129"/>
    </location>
    <ligand>
        <name>dCTP</name>
        <dbReference type="ChEBI" id="CHEBI:61481"/>
    </ligand>
</feature>
<feature type="binding site" evidence="1">
    <location>
        <position position="148"/>
    </location>
    <ligand>
        <name>dCTP</name>
        <dbReference type="ChEBI" id="CHEBI:61481"/>
    </ligand>
</feature>
<feature type="binding site" evidence="1">
    <location>
        <position position="162"/>
    </location>
    <ligand>
        <name>dCTP</name>
        <dbReference type="ChEBI" id="CHEBI:61481"/>
    </ligand>
</feature>
<feature type="binding site" evidence="1">
    <location>
        <position position="174"/>
    </location>
    <ligand>
        <name>dCTP</name>
        <dbReference type="ChEBI" id="CHEBI:61481"/>
    </ligand>
</feature>
<feature type="site" description="Important for bifunctional activity" evidence="1">
    <location>
        <begin position="116"/>
        <end position="117"/>
    </location>
</feature>
<proteinExistence type="inferred from homology"/>
<gene>
    <name evidence="1" type="primary">dcd</name>
    <name type="ordered locus">Acel_2112</name>
</gene>
<reference key="1">
    <citation type="journal article" date="2009" name="Genome Res.">
        <title>Complete genome of the cellulolytic thermophile Acidothermus cellulolyticus 11B provides insights into its ecophysiological and evolutionary adaptations.</title>
        <authorList>
            <person name="Barabote R.D."/>
            <person name="Xie G."/>
            <person name="Leu D.H."/>
            <person name="Normand P."/>
            <person name="Necsulea A."/>
            <person name="Daubin V."/>
            <person name="Medigue C."/>
            <person name="Adney W.S."/>
            <person name="Xu X.C."/>
            <person name="Lapidus A."/>
            <person name="Parales R.E."/>
            <person name="Detter C."/>
            <person name="Pujic P."/>
            <person name="Bruce D."/>
            <person name="Lavire C."/>
            <person name="Challacombe J.F."/>
            <person name="Brettin T.S."/>
            <person name="Berry A.M."/>
        </authorList>
    </citation>
    <scope>NUCLEOTIDE SEQUENCE [LARGE SCALE GENOMIC DNA]</scope>
    <source>
        <strain>ATCC 43068 / DSM 8971 / 11B</strain>
    </source>
</reference>
<dbReference type="EC" id="3.5.4.30" evidence="1"/>
<dbReference type="EMBL" id="CP000481">
    <property type="protein sequence ID" value="ABK53884.1"/>
    <property type="molecule type" value="Genomic_DNA"/>
</dbReference>
<dbReference type="RefSeq" id="WP_011720947.1">
    <property type="nucleotide sequence ID" value="NC_008578.1"/>
</dbReference>
<dbReference type="SMR" id="A0LWS4"/>
<dbReference type="FunCoup" id="A0LWS4">
    <property type="interactions" value="27"/>
</dbReference>
<dbReference type="STRING" id="351607.Acel_2112"/>
<dbReference type="KEGG" id="ace:Acel_2112"/>
<dbReference type="eggNOG" id="COG0717">
    <property type="taxonomic scope" value="Bacteria"/>
</dbReference>
<dbReference type="HOGENOM" id="CLU_087476_2_0_11"/>
<dbReference type="InParanoid" id="A0LWS4"/>
<dbReference type="OrthoDB" id="9780956at2"/>
<dbReference type="UniPathway" id="UPA00610">
    <property type="reaction ID" value="UER00667"/>
</dbReference>
<dbReference type="Proteomes" id="UP000008221">
    <property type="component" value="Chromosome"/>
</dbReference>
<dbReference type="GO" id="GO:0033973">
    <property type="term" value="F:dCTP deaminase (dUMP-forming) activity"/>
    <property type="evidence" value="ECO:0007669"/>
    <property type="project" value="UniProtKB-UniRule"/>
</dbReference>
<dbReference type="GO" id="GO:0008829">
    <property type="term" value="F:dCTP deaminase activity"/>
    <property type="evidence" value="ECO:0007669"/>
    <property type="project" value="InterPro"/>
</dbReference>
<dbReference type="GO" id="GO:0000166">
    <property type="term" value="F:nucleotide binding"/>
    <property type="evidence" value="ECO:0007669"/>
    <property type="project" value="UniProtKB-KW"/>
</dbReference>
<dbReference type="GO" id="GO:0006226">
    <property type="term" value="P:dUMP biosynthetic process"/>
    <property type="evidence" value="ECO:0007669"/>
    <property type="project" value="UniProtKB-UniRule"/>
</dbReference>
<dbReference type="GO" id="GO:0006229">
    <property type="term" value="P:dUTP biosynthetic process"/>
    <property type="evidence" value="ECO:0007669"/>
    <property type="project" value="InterPro"/>
</dbReference>
<dbReference type="GO" id="GO:0015949">
    <property type="term" value="P:nucleobase-containing small molecule interconversion"/>
    <property type="evidence" value="ECO:0007669"/>
    <property type="project" value="TreeGrafter"/>
</dbReference>
<dbReference type="CDD" id="cd07557">
    <property type="entry name" value="trimeric_dUTPase"/>
    <property type="match status" value="1"/>
</dbReference>
<dbReference type="FunFam" id="2.70.40.10:FF:000005">
    <property type="entry name" value="dCTP deaminase, dUMP-forming"/>
    <property type="match status" value="1"/>
</dbReference>
<dbReference type="Gene3D" id="2.70.40.10">
    <property type="match status" value="1"/>
</dbReference>
<dbReference type="HAMAP" id="MF_00146">
    <property type="entry name" value="dCTP_deaminase"/>
    <property type="match status" value="1"/>
</dbReference>
<dbReference type="InterPro" id="IPR011962">
    <property type="entry name" value="dCTP_deaminase"/>
</dbReference>
<dbReference type="InterPro" id="IPR036157">
    <property type="entry name" value="dUTPase-like_sf"/>
</dbReference>
<dbReference type="InterPro" id="IPR033704">
    <property type="entry name" value="dUTPase_trimeric"/>
</dbReference>
<dbReference type="NCBIfam" id="TIGR02274">
    <property type="entry name" value="dCTP_deam"/>
    <property type="match status" value="1"/>
</dbReference>
<dbReference type="PANTHER" id="PTHR42680">
    <property type="entry name" value="DCTP DEAMINASE"/>
    <property type="match status" value="1"/>
</dbReference>
<dbReference type="PANTHER" id="PTHR42680:SF3">
    <property type="entry name" value="DCTP DEAMINASE"/>
    <property type="match status" value="1"/>
</dbReference>
<dbReference type="Pfam" id="PF22769">
    <property type="entry name" value="DCD"/>
    <property type="match status" value="1"/>
</dbReference>
<dbReference type="SUPFAM" id="SSF51283">
    <property type="entry name" value="dUTPase-like"/>
    <property type="match status" value="1"/>
</dbReference>
<protein>
    <recommendedName>
        <fullName evidence="1">dCTP deaminase, dUMP-forming</fullName>
        <ecNumber evidence="1">3.5.4.30</ecNumber>
    </recommendedName>
    <alternativeName>
        <fullName evidence="1">Bifunctional dCTP deaminase:dUTPase</fullName>
    </alternativeName>
    <alternativeName>
        <fullName evidence="1">DCD-DUT</fullName>
    </alternativeName>
</protein>
<evidence type="ECO:0000255" key="1">
    <source>
        <dbReference type="HAMAP-Rule" id="MF_00146"/>
    </source>
</evidence>
<evidence type="ECO:0000256" key="2">
    <source>
        <dbReference type="SAM" id="MobiDB-lite"/>
    </source>
</evidence>
<comment type="function">
    <text evidence="1">Bifunctional enzyme that catalyzes both the deamination of dCTP to dUTP and the hydrolysis of dUTP to dUMP without releasing the toxic dUTP intermediate.</text>
</comment>
<comment type="catalytic activity">
    <reaction evidence="1">
        <text>dCTP + 2 H2O = dUMP + NH4(+) + diphosphate</text>
        <dbReference type="Rhea" id="RHEA:19205"/>
        <dbReference type="ChEBI" id="CHEBI:15377"/>
        <dbReference type="ChEBI" id="CHEBI:28938"/>
        <dbReference type="ChEBI" id="CHEBI:33019"/>
        <dbReference type="ChEBI" id="CHEBI:61481"/>
        <dbReference type="ChEBI" id="CHEBI:246422"/>
        <dbReference type="EC" id="3.5.4.30"/>
    </reaction>
</comment>
<comment type="pathway">
    <text evidence="1">Pyrimidine metabolism; dUMP biosynthesis; dUMP from dCTP: step 1/1.</text>
</comment>
<comment type="subunit">
    <text evidence="1">Homotrimer.</text>
</comment>
<comment type="similarity">
    <text evidence="1">Belongs to the dCTP deaminase family.</text>
</comment>